<gene>
    <name evidence="1" type="primary">gltX</name>
    <name type="ordered locus">Mmc1_0944</name>
</gene>
<organism>
    <name type="scientific">Magnetococcus marinus (strain ATCC BAA-1437 / JCM 17883 / MC-1)</name>
    <dbReference type="NCBI Taxonomy" id="156889"/>
    <lineage>
        <taxon>Bacteria</taxon>
        <taxon>Pseudomonadati</taxon>
        <taxon>Pseudomonadota</taxon>
        <taxon>Alphaproteobacteria</taxon>
        <taxon>Magnetococcales</taxon>
        <taxon>Magnetococcaceae</taxon>
        <taxon>Magnetococcus</taxon>
    </lineage>
</organism>
<name>SYE_MAGMM</name>
<keyword id="KW-0030">Aminoacyl-tRNA synthetase</keyword>
<keyword id="KW-0067">ATP-binding</keyword>
<keyword id="KW-0963">Cytoplasm</keyword>
<keyword id="KW-0436">Ligase</keyword>
<keyword id="KW-0479">Metal-binding</keyword>
<keyword id="KW-0547">Nucleotide-binding</keyword>
<keyword id="KW-0648">Protein biosynthesis</keyword>
<keyword id="KW-1185">Reference proteome</keyword>
<keyword id="KW-0862">Zinc</keyword>
<proteinExistence type="inferred from homology"/>
<accession>A0L669</accession>
<protein>
    <recommendedName>
        <fullName evidence="1">Glutamate--tRNA ligase</fullName>
        <ecNumber evidence="1">6.1.1.17</ecNumber>
    </recommendedName>
    <alternativeName>
        <fullName evidence="1">Glutamyl-tRNA synthetase</fullName>
        <shortName evidence="1">GluRS</shortName>
    </alternativeName>
</protein>
<evidence type="ECO:0000255" key="1">
    <source>
        <dbReference type="HAMAP-Rule" id="MF_00022"/>
    </source>
</evidence>
<evidence type="ECO:0000256" key="2">
    <source>
        <dbReference type="SAM" id="MobiDB-lite"/>
    </source>
</evidence>
<dbReference type="EC" id="6.1.1.17" evidence="1"/>
<dbReference type="EMBL" id="CP000471">
    <property type="protein sequence ID" value="ABK43462.1"/>
    <property type="molecule type" value="Genomic_DNA"/>
</dbReference>
<dbReference type="SMR" id="A0L669"/>
<dbReference type="STRING" id="156889.Mmc1_0944"/>
<dbReference type="KEGG" id="mgm:Mmc1_0944"/>
<dbReference type="eggNOG" id="COG0008">
    <property type="taxonomic scope" value="Bacteria"/>
</dbReference>
<dbReference type="HOGENOM" id="CLU_015768_6_3_5"/>
<dbReference type="Proteomes" id="UP000002586">
    <property type="component" value="Chromosome"/>
</dbReference>
<dbReference type="GO" id="GO:0005829">
    <property type="term" value="C:cytosol"/>
    <property type="evidence" value="ECO:0007669"/>
    <property type="project" value="TreeGrafter"/>
</dbReference>
<dbReference type="GO" id="GO:0005524">
    <property type="term" value="F:ATP binding"/>
    <property type="evidence" value="ECO:0007669"/>
    <property type="project" value="UniProtKB-UniRule"/>
</dbReference>
<dbReference type="GO" id="GO:0004818">
    <property type="term" value="F:glutamate-tRNA ligase activity"/>
    <property type="evidence" value="ECO:0007669"/>
    <property type="project" value="UniProtKB-UniRule"/>
</dbReference>
<dbReference type="GO" id="GO:0000049">
    <property type="term" value="F:tRNA binding"/>
    <property type="evidence" value="ECO:0007669"/>
    <property type="project" value="InterPro"/>
</dbReference>
<dbReference type="GO" id="GO:0008270">
    <property type="term" value="F:zinc ion binding"/>
    <property type="evidence" value="ECO:0007669"/>
    <property type="project" value="UniProtKB-UniRule"/>
</dbReference>
<dbReference type="GO" id="GO:0006424">
    <property type="term" value="P:glutamyl-tRNA aminoacylation"/>
    <property type="evidence" value="ECO:0007669"/>
    <property type="project" value="UniProtKB-UniRule"/>
</dbReference>
<dbReference type="CDD" id="cd00808">
    <property type="entry name" value="GluRS_core"/>
    <property type="match status" value="1"/>
</dbReference>
<dbReference type="FunFam" id="3.40.50.620:FF:000007">
    <property type="entry name" value="Glutamate--tRNA ligase"/>
    <property type="match status" value="1"/>
</dbReference>
<dbReference type="Gene3D" id="1.10.10.350">
    <property type="match status" value="1"/>
</dbReference>
<dbReference type="Gene3D" id="3.40.50.620">
    <property type="entry name" value="HUPs"/>
    <property type="match status" value="1"/>
</dbReference>
<dbReference type="HAMAP" id="MF_00022">
    <property type="entry name" value="Glu_tRNA_synth_type1"/>
    <property type="match status" value="1"/>
</dbReference>
<dbReference type="InterPro" id="IPR045462">
    <property type="entry name" value="aa-tRNA-synth_I_cd-bd"/>
</dbReference>
<dbReference type="InterPro" id="IPR020751">
    <property type="entry name" value="aa-tRNA-synth_I_codon-bd_sub2"/>
</dbReference>
<dbReference type="InterPro" id="IPR001412">
    <property type="entry name" value="aa-tRNA-synth_I_CS"/>
</dbReference>
<dbReference type="InterPro" id="IPR008925">
    <property type="entry name" value="aa_tRNA-synth_I_cd-bd_sf"/>
</dbReference>
<dbReference type="InterPro" id="IPR004527">
    <property type="entry name" value="Glu-tRNA-ligase_bac/mito"/>
</dbReference>
<dbReference type="InterPro" id="IPR000924">
    <property type="entry name" value="Glu/Gln-tRNA-synth"/>
</dbReference>
<dbReference type="InterPro" id="IPR020058">
    <property type="entry name" value="Glu/Gln-tRNA-synth_Ib_cat-dom"/>
</dbReference>
<dbReference type="InterPro" id="IPR049940">
    <property type="entry name" value="GluQ/Sye"/>
</dbReference>
<dbReference type="InterPro" id="IPR033910">
    <property type="entry name" value="GluRS_core"/>
</dbReference>
<dbReference type="InterPro" id="IPR014729">
    <property type="entry name" value="Rossmann-like_a/b/a_fold"/>
</dbReference>
<dbReference type="NCBIfam" id="TIGR00464">
    <property type="entry name" value="gltX_bact"/>
    <property type="match status" value="1"/>
</dbReference>
<dbReference type="PANTHER" id="PTHR43311">
    <property type="entry name" value="GLUTAMATE--TRNA LIGASE"/>
    <property type="match status" value="1"/>
</dbReference>
<dbReference type="PANTHER" id="PTHR43311:SF2">
    <property type="entry name" value="GLUTAMATE--TRNA LIGASE, MITOCHONDRIAL-RELATED"/>
    <property type="match status" value="1"/>
</dbReference>
<dbReference type="Pfam" id="PF19269">
    <property type="entry name" value="Anticodon_2"/>
    <property type="match status" value="1"/>
</dbReference>
<dbReference type="Pfam" id="PF00749">
    <property type="entry name" value="tRNA-synt_1c"/>
    <property type="match status" value="1"/>
</dbReference>
<dbReference type="PRINTS" id="PR00987">
    <property type="entry name" value="TRNASYNTHGLU"/>
</dbReference>
<dbReference type="SUPFAM" id="SSF48163">
    <property type="entry name" value="An anticodon-binding domain of class I aminoacyl-tRNA synthetases"/>
    <property type="match status" value="1"/>
</dbReference>
<dbReference type="SUPFAM" id="SSF52374">
    <property type="entry name" value="Nucleotidylyl transferase"/>
    <property type="match status" value="1"/>
</dbReference>
<dbReference type="PROSITE" id="PS00178">
    <property type="entry name" value="AA_TRNA_LIGASE_I"/>
    <property type="match status" value="1"/>
</dbReference>
<feature type="chain" id="PRO_0000330978" description="Glutamate--tRNA ligase">
    <location>
        <begin position="1"/>
        <end position="472"/>
    </location>
</feature>
<feature type="region of interest" description="Disordered" evidence="2">
    <location>
        <begin position="112"/>
        <end position="134"/>
    </location>
</feature>
<feature type="short sequence motif" description="'HIGH' region" evidence="1">
    <location>
        <begin position="7"/>
        <end position="17"/>
    </location>
</feature>
<feature type="short sequence motif" description="'KMSKS' region" evidence="1">
    <location>
        <begin position="234"/>
        <end position="238"/>
    </location>
</feature>
<feature type="compositionally biased region" description="Basic and acidic residues" evidence="2">
    <location>
        <begin position="112"/>
        <end position="129"/>
    </location>
</feature>
<feature type="binding site" evidence="1">
    <location>
        <position position="96"/>
    </location>
    <ligand>
        <name>Zn(2+)</name>
        <dbReference type="ChEBI" id="CHEBI:29105"/>
    </ligand>
</feature>
<feature type="binding site" evidence="1">
    <location>
        <position position="98"/>
    </location>
    <ligand>
        <name>Zn(2+)</name>
        <dbReference type="ChEBI" id="CHEBI:29105"/>
    </ligand>
</feature>
<feature type="binding site" evidence="1">
    <location>
        <position position="123"/>
    </location>
    <ligand>
        <name>Zn(2+)</name>
        <dbReference type="ChEBI" id="CHEBI:29105"/>
    </ligand>
</feature>
<feature type="binding site" evidence="1">
    <location>
        <position position="125"/>
    </location>
    <ligand>
        <name>Zn(2+)</name>
        <dbReference type="ChEBI" id="CHEBI:29105"/>
    </ligand>
</feature>
<feature type="binding site" evidence="1">
    <location>
        <position position="237"/>
    </location>
    <ligand>
        <name>ATP</name>
        <dbReference type="ChEBI" id="CHEBI:30616"/>
    </ligand>
</feature>
<sequence>MRTRFAPSPTGFLHVGGARTALFCHLQARHVGGTTVLRIEDTDRERSNQALVDAILDGLHWLGLDPDEGPLFQSDHTQRHTDMALKLLEEGKAYKCYCTKQELDDMRAAQQARKEKPRYDGRCRHRSEPPSDQPYVIRFKTPLEGEVVWPDMVQGTIHIANKELDDLILLRSDGSPTYNLAVVVDDHDMEITHVIRGEDHTSNTPRQIHLFQALGWDVPSYAHIPLLHGEDGSKLSKRHGAVSVLQFREEGFLASALNNYLVRMGWSHGEKEEFTMDEMVALFDVNNVGRSAAIFNTSKLLWLNGVHIRQSGPEQLRGELMWHLQRLGVDNPNPNFIDQIIPGMQERVKTMLEMAQMAMFYFKAPTEYAETAVAKHLHADILPAYAALLEKLHTVTADEWDNGGLERAFKVVMAETGAKMGKIGQPVRIAISGSDIAPGIYDILQLVGRHESLRRLEVLLSFFQQRVHGANG</sequence>
<reference key="1">
    <citation type="journal article" date="2009" name="Appl. Environ. Microbiol.">
        <title>Complete genome sequence of the chemolithoautotrophic marine magnetotactic coccus strain MC-1.</title>
        <authorList>
            <person name="Schubbe S."/>
            <person name="Williams T.J."/>
            <person name="Xie G."/>
            <person name="Kiss H.E."/>
            <person name="Brettin T.S."/>
            <person name="Martinez D."/>
            <person name="Ross C.A."/>
            <person name="Schuler D."/>
            <person name="Cox B.L."/>
            <person name="Nealson K.H."/>
            <person name="Bazylinski D.A."/>
        </authorList>
    </citation>
    <scope>NUCLEOTIDE SEQUENCE [LARGE SCALE GENOMIC DNA]</scope>
    <source>
        <strain>ATCC BAA-1437 / JCM 17883 / MC-1</strain>
    </source>
</reference>
<comment type="function">
    <text evidence="1">Catalyzes the attachment of glutamate to tRNA(Glu) in a two-step reaction: glutamate is first activated by ATP to form Glu-AMP and then transferred to the acceptor end of tRNA(Glu).</text>
</comment>
<comment type="catalytic activity">
    <reaction evidence="1">
        <text>tRNA(Glu) + L-glutamate + ATP = L-glutamyl-tRNA(Glu) + AMP + diphosphate</text>
        <dbReference type="Rhea" id="RHEA:23540"/>
        <dbReference type="Rhea" id="RHEA-COMP:9663"/>
        <dbReference type="Rhea" id="RHEA-COMP:9680"/>
        <dbReference type="ChEBI" id="CHEBI:29985"/>
        <dbReference type="ChEBI" id="CHEBI:30616"/>
        <dbReference type="ChEBI" id="CHEBI:33019"/>
        <dbReference type="ChEBI" id="CHEBI:78442"/>
        <dbReference type="ChEBI" id="CHEBI:78520"/>
        <dbReference type="ChEBI" id="CHEBI:456215"/>
        <dbReference type="EC" id="6.1.1.17"/>
    </reaction>
</comment>
<comment type="cofactor">
    <cofactor evidence="1">
        <name>Zn(2+)</name>
        <dbReference type="ChEBI" id="CHEBI:29105"/>
    </cofactor>
    <text evidence="1">Binds 1 zinc ion per subunit.</text>
</comment>
<comment type="subunit">
    <text evidence="1">Monomer.</text>
</comment>
<comment type="subcellular location">
    <subcellularLocation>
        <location evidence="1">Cytoplasm</location>
    </subcellularLocation>
</comment>
<comment type="similarity">
    <text evidence="1">Belongs to the class-I aminoacyl-tRNA synthetase family. Glutamate--tRNA ligase type 1 subfamily.</text>
</comment>